<reference key="1">
    <citation type="journal article" date="1991" name="Mol. Gen. Genet.">
        <title>Molecular cloning and expression of a Tetrahymena pyriformis ubiquitin fusion gene coding for a 53-amino-acid extension protein.</title>
        <authorList>
            <person name="Neves A.M."/>
            <person name="Guerreiro P."/>
            <person name="Miquerol L."/>
            <person name="Rodrigues-Pousada C."/>
        </authorList>
    </citation>
    <scope>NUCLEOTIDE SEQUENCE [GENOMIC DNA]</scope>
</reference>
<sequence>MQIFVKTLTGKTITLDVEASDTIENVKAKIQDKEGIPPDQQRLIFAGKQLEDGRTLSDYNIQKESTLHLVLRLRGGGMEPTIAALAKKYNCEKKVCRDCYARLPPKATNCRKRKCGHSNSLRLKKKPKE</sequence>
<gene>
    <name type="primary">TUF11</name>
</gene>
<comment type="function">
    <molecule>Ubiquitin</molecule>
    <text evidence="1">Exists either covalently attached to another protein, or free (unanchored). When covalently bound, it is conjugated to target proteins via an isopeptide bond either as a monomer (monoubiquitin), a polymer linked via different Lys residues of the ubiquitin (polyubiquitin chains) or a linear polymer linked via the initiator Met of the ubiquitin (linear polyubiquitin chains). Polyubiquitin chains, when attached to a target protein, have different functions depending on the Lys residue of the ubiquitin that is linked: Lys-48-linked is involved in protein degradation via the proteasome. Linear polymer chains formed via attachment by the initiator Met lead to cell signaling. Ubiquitin is usually conjugated to Lys residues of target proteins, however, in rare cases, conjugation to Cys or Ser residues has been observed. When polyubiquitin is free (unanchored-polyubiquitin), it also has distinct roles, such as in activation of protein kinases, and in signaling (By similarity).</text>
</comment>
<comment type="function">
    <molecule>Large ribosomal subunit protein eL40</molecule>
    <text evidence="1">Component of the 60S subunit of the ribosome.</text>
</comment>
<comment type="subunit">
    <molecule>Large ribosomal subunit protein eL40</molecule>
    <text evidence="1">Part of the 60S ribosomal subunit.</text>
</comment>
<comment type="subcellular location">
    <molecule>Ubiquitin</molecule>
    <subcellularLocation>
        <location evidence="1">Cytoplasm</location>
    </subcellularLocation>
    <subcellularLocation>
        <location evidence="1">Nucleus</location>
    </subcellularLocation>
</comment>
<comment type="subcellular location">
    <molecule>Large ribosomal subunit protein eL40</molecule>
    <subcellularLocation>
        <location evidence="1">Cytoplasm</location>
    </subcellularLocation>
</comment>
<comment type="miscellaneous">
    <text>Ubiquitin is generally synthesized as a polyubiquitin precursor. Some ubiquitin genes contain a single copy of ubiquitin fused to a ribosomal protein.</text>
</comment>
<comment type="similarity">
    <text evidence="3">In the N-terminal section; belongs to the ubiquitin family.</text>
</comment>
<comment type="similarity">
    <text evidence="3">In the C-terminal section; belongs to the eukaryotic ribosomal protein eL40 family.</text>
</comment>
<dbReference type="EMBL" id="X56693">
    <property type="protein sequence ID" value="CAA40021.1"/>
    <property type="molecule type" value="Genomic_DNA"/>
</dbReference>
<dbReference type="PIR" id="S18535">
    <property type="entry name" value="S18535"/>
</dbReference>
<dbReference type="SMR" id="P33190"/>
<dbReference type="GO" id="GO:0005737">
    <property type="term" value="C:cytoplasm"/>
    <property type="evidence" value="ECO:0007669"/>
    <property type="project" value="UniProtKB-SubCell"/>
</dbReference>
<dbReference type="GO" id="GO:0005634">
    <property type="term" value="C:nucleus"/>
    <property type="evidence" value="ECO:0007669"/>
    <property type="project" value="UniProtKB-SubCell"/>
</dbReference>
<dbReference type="GO" id="GO:1990904">
    <property type="term" value="C:ribonucleoprotein complex"/>
    <property type="evidence" value="ECO:0007669"/>
    <property type="project" value="UniProtKB-KW"/>
</dbReference>
<dbReference type="GO" id="GO:0005840">
    <property type="term" value="C:ribosome"/>
    <property type="evidence" value="ECO:0007669"/>
    <property type="project" value="UniProtKB-KW"/>
</dbReference>
<dbReference type="GO" id="GO:0003735">
    <property type="term" value="F:structural constituent of ribosome"/>
    <property type="evidence" value="ECO:0007669"/>
    <property type="project" value="InterPro"/>
</dbReference>
<dbReference type="GO" id="GO:0006412">
    <property type="term" value="P:translation"/>
    <property type="evidence" value="ECO:0007669"/>
    <property type="project" value="InterPro"/>
</dbReference>
<dbReference type="CDD" id="cd01803">
    <property type="entry name" value="Ubl_ubiquitin"/>
    <property type="match status" value="1"/>
</dbReference>
<dbReference type="FunFam" id="3.10.20.90:FF:000158">
    <property type="entry name" value="Polyubiquitin 5"/>
    <property type="match status" value="1"/>
</dbReference>
<dbReference type="FunFam" id="4.10.1060.50:FF:000001">
    <property type="entry name" value="ubiquitin-60S ribosomal protein L40"/>
    <property type="match status" value="1"/>
</dbReference>
<dbReference type="Gene3D" id="4.10.1060.50">
    <property type="match status" value="1"/>
</dbReference>
<dbReference type="Gene3D" id="3.10.20.90">
    <property type="entry name" value="Phosphatidylinositol 3-kinase Catalytic Subunit, Chain A, domain 1"/>
    <property type="match status" value="1"/>
</dbReference>
<dbReference type="InterPro" id="IPR001975">
    <property type="entry name" value="Ribosomal_eL40_dom"/>
</dbReference>
<dbReference type="InterPro" id="IPR038587">
    <property type="entry name" value="Ribosomal_eL40_sf"/>
</dbReference>
<dbReference type="InterPro" id="IPR011332">
    <property type="entry name" value="Ribosomal_zn-bd"/>
</dbReference>
<dbReference type="InterPro" id="IPR000626">
    <property type="entry name" value="Ubiquitin-like_dom"/>
</dbReference>
<dbReference type="InterPro" id="IPR029071">
    <property type="entry name" value="Ubiquitin-like_domsf"/>
</dbReference>
<dbReference type="InterPro" id="IPR019954">
    <property type="entry name" value="Ubiquitin_CS"/>
</dbReference>
<dbReference type="InterPro" id="IPR019956">
    <property type="entry name" value="Ubiquitin_dom"/>
</dbReference>
<dbReference type="InterPro" id="IPR050158">
    <property type="entry name" value="Ubiquitin_ubiquitin-like"/>
</dbReference>
<dbReference type="PANTHER" id="PTHR10666">
    <property type="entry name" value="UBIQUITIN"/>
    <property type="match status" value="1"/>
</dbReference>
<dbReference type="Pfam" id="PF01020">
    <property type="entry name" value="Ribosomal_L40e"/>
    <property type="match status" value="1"/>
</dbReference>
<dbReference type="Pfam" id="PF00240">
    <property type="entry name" value="ubiquitin"/>
    <property type="match status" value="1"/>
</dbReference>
<dbReference type="PRINTS" id="PR00348">
    <property type="entry name" value="UBIQUITIN"/>
</dbReference>
<dbReference type="SMART" id="SM01377">
    <property type="entry name" value="Ribosomal_L40e"/>
    <property type="match status" value="1"/>
</dbReference>
<dbReference type="SMART" id="SM00213">
    <property type="entry name" value="UBQ"/>
    <property type="match status" value="1"/>
</dbReference>
<dbReference type="SUPFAM" id="SSF54236">
    <property type="entry name" value="Ubiquitin-like"/>
    <property type="match status" value="1"/>
</dbReference>
<dbReference type="SUPFAM" id="SSF57829">
    <property type="entry name" value="Zn-binding ribosomal proteins"/>
    <property type="match status" value="1"/>
</dbReference>
<dbReference type="PROSITE" id="PS00299">
    <property type="entry name" value="UBIQUITIN_1"/>
    <property type="match status" value="1"/>
</dbReference>
<dbReference type="PROSITE" id="PS50053">
    <property type="entry name" value="UBIQUITIN_2"/>
    <property type="match status" value="1"/>
</dbReference>
<accession>P33190</accession>
<accession>P20685</accession>
<proteinExistence type="inferred from homology"/>
<feature type="chain" id="PRO_0000114827" description="Ubiquitin">
    <location>
        <begin position="1"/>
        <end position="76"/>
    </location>
</feature>
<feature type="chain" id="PRO_0000138771" description="Large ribosomal subunit protein eL40">
    <location>
        <begin position="77"/>
        <end position="129"/>
    </location>
</feature>
<feature type="domain" description="Ubiquitin-like" evidence="2">
    <location>
        <begin position="1"/>
        <end position="76"/>
    </location>
</feature>
<feature type="cross-link" description="Glycyl lysine isopeptide (Lys-Gly) (interchain with G-Cter in ubiquitin)" evidence="1">
    <location>
        <position position="48"/>
    </location>
</feature>
<feature type="cross-link" description="Glycyl lysine isopeptide (Gly-Lys) (interchain with K-? in acceptor proteins)" evidence="2">
    <location>
        <position position="76"/>
    </location>
</feature>
<keyword id="KW-0963">Cytoplasm</keyword>
<keyword id="KW-1017">Isopeptide bond</keyword>
<keyword id="KW-0539">Nucleus</keyword>
<keyword id="KW-0687">Ribonucleoprotein</keyword>
<keyword id="KW-0689">Ribosomal protein</keyword>
<keyword id="KW-0832">Ubl conjugation</keyword>
<name>RL40_TETPY</name>
<organism>
    <name type="scientific">Tetrahymena pyriformis</name>
    <dbReference type="NCBI Taxonomy" id="5908"/>
    <lineage>
        <taxon>Eukaryota</taxon>
        <taxon>Sar</taxon>
        <taxon>Alveolata</taxon>
        <taxon>Ciliophora</taxon>
        <taxon>Intramacronucleata</taxon>
        <taxon>Oligohymenophorea</taxon>
        <taxon>Hymenostomatida</taxon>
        <taxon>Tetrahymenina</taxon>
        <taxon>Tetrahymenidae</taxon>
        <taxon>Tetrahymena</taxon>
    </lineage>
</organism>
<protein>
    <recommendedName>
        <fullName evidence="3">Ubiquitin-ribosomal protein eL40 fusion protein</fullName>
    </recommendedName>
    <component>
        <recommendedName>
            <fullName>Ubiquitin</fullName>
        </recommendedName>
    </component>
    <component>
        <recommendedName>
            <fullName evidence="3">Large ribosomal subunit protein eL40</fullName>
        </recommendedName>
        <alternativeName>
            <fullName>60S ribosomal protein L40</fullName>
        </alternativeName>
        <alternativeName>
            <fullName>CEP52</fullName>
        </alternativeName>
        <alternativeName>
            <fullName>CEP53</fullName>
        </alternativeName>
    </component>
</protein>
<evidence type="ECO:0000250" key="1"/>
<evidence type="ECO:0000255" key="2">
    <source>
        <dbReference type="PROSITE-ProRule" id="PRU00214"/>
    </source>
</evidence>
<evidence type="ECO:0000305" key="3"/>